<dbReference type="EMBL" id="CP000348">
    <property type="protein sequence ID" value="ABJ78035.1"/>
    <property type="molecule type" value="Genomic_DNA"/>
</dbReference>
<dbReference type="EMBL" id="CP000348">
    <property type="protein sequence ID" value="ABJ78075.1"/>
    <property type="molecule type" value="Genomic_DNA"/>
</dbReference>
<dbReference type="SMR" id="Q055C0"/>
<dbReference type="KEGG" id="lbl:LBL_0437"/>
<dbReference type="KEGG" id="lbl:LBL_0477"/>
<dbReference type="HOGENOM" id="CLU_103849_1_2_12"/>
<dbReference type="GO" id="GO:0005829">
    <property type="term" value="C:cytosol"/>
    <property type="evidence" value="ECO:0007669"/>
    <property type="project" value="TreeGrafter"/>
</dbReference>
<dbReference type="GO" id="GO:0015935">
    <property type="term" value="C:small ribosomal subunit"/>
    <property type="evidence" value="ECO:0007669"/>
    <property type="project" value="TreeGrafter"/>
</dbReference>
<dbReference type="GO" id="GO:0019843">
    <property type="term" value="F:rRNA binding"/>
    <property type="evidence" value="ECO:0007669"/>
    <property type="project" value="UniProtKB-UniRule"/>
</dbReference>
<dbReference type="GO" id="GO:0003735">
    <property type="term" value="F:structural constituent of ribosome"/>
    <property type="evidence" value="ECO:0007669"/>
    <property type="project" value="InterPro"/>
</dbReference>
<dbReference type="GO" id="GO:0000049">
    <property type="term" value="F:tRNA binding"/>
    <property type="evidence" value="ECO:0007669"/>
    <property type="project" value="UniProtKB-UniRule"/>
</dbReference>
<dbReference type="GO" id="GO:0006412">
    <property type="term" value="P:translation"/>
    <property type="evidence" value="ECO:0007669"/>
    <property type="project" value="UniProtKB-UniRule"/>
</dbReference>
<dbReference type="FunFam" id="1.10.8.50:FF:000001">
    <property type="entry name" value="30S ribosomal protein S13"/>
    <property type="match status" value="1"/>
</dbReference>
<dbReference type="FunFam" id="4.10.910.10:FF:000001">
    <property type="entry name" value="30S ribosomal protein S13"/>
    <property type="match status" value="1"/>
</dbReference>
<dbReference type="Gene3D" id="1.10.8.50">
    <property type="match status" value="1"/>
</dbReference>
<dbReference type="Gene3D" id="4.10.910.10">
    <property type="entry name" value="30s ribosomal protein s13, domain 2"/>
    <property type="match status" value="1"/>
</dbReference>
<dbReference type="HAMAP" id="MF_01315">
    <property type="entry name" value="Ribosomal_uS13"/>
    <property type="match status" value="1"/>
</dbReference>
<dbReference type="InterPro" id="IPR027437">
    <property type="entry name" value="Rbsml_uS13_C"/>
</dbReference>
<dbReference type="InterPro" id="IPR001892">
    <property type="entry name" value="Ribosomal_uS13"/>
</dbReference>
<dbReference type="InterPro" id="IPR010979">
    <property type="entry name" value="Ribosomal_uS13-like_H2TH"/>
</dbReference>
<dbReference type="InterPro" id="IPR019980">
    <property type="entry name" value="Ribosomal_uS13_bac-type"/>
</dbReference>
<dbReference type="InterPro" id="IPR018269">
    <property type="entry name" value="Ribosomal_uS13_CS"/>
</dbReference>
<dbReference type="NCBIfam" id="TIGR03631">
    <property type="entry name" value="uS13_bact"/>
    <property type="match status" value="1"/>
</dbReference>
<dbReference type="PANTHER" id="PTHR10871">
    <property type="entry name" value="30S RIBOSOMAL PROTEIN S13/40S RIBOSOMAL PROTEIN S18"/>
    <property type="match status" value="1"/>
</dbReference>
<dbReference type="PANTHER" id="PTHR10871:SF1">
    <property type="entry name" value="SMALL RIBOSOMAL SUBUNIT PROTEIN US13M"/>
    <property type="match status" value="1"/>
</dbReference>
<dbReference type="Pfam" id="PF00416">
    <property type="entry name" value="Ribosomal_S13"/>
    <property type="match status" value="1"/>
</dbReference>
<dbReference type="PIRSF" id="PIRSF002134">
    <property type="entry name" value="Ribosomal_S13"/>
    <property type="match status" value="1"/>
</dbReference>
<dbReference type="SUPFAM" id="SSF46946">
    <property type="entry name" value="S13-like H2TH domain"/>
    <property type="match status" value="1"/>
</dbReference>
<dbReference type="PROSITE" id="PS00646">
    <property type="entry name" value="RIBOSOMAL_S13_1"/>
    <property type="match status" value="1"/>
</dbReference>
<dbReference type="PROSITE" id="PS50159">
    <property type="entry name" value="RIBOSOMAL_S13_2"/>
    <property type="match status" value="1"/>
</dbReference>
<accession>Q055C0</accession>
<organism>
    <name type="scientific">Leptospira borgpetersenii serovar Hardjo-bovis (strain L550)</name>
    <dbReference type="NCBI Taxonomy" id="355276"/>
    <lineage>
        <taxon>Bacteria</taxon>
        <taxon>Pseudomonadati</taxon>
        <taxon>Spirochaetota</taxon>
        <taxon>Spirochaetia</taxon>
        <taxon>Leptospirales</taxon>
        <taxon>Leptospiraceae</taxon>
        <taxon>Leptospira</taxon>
    </lineage>
</organism>
<name>RS13_LEPBL</name>
<reference key="1">
    <citation type="journal article" date="2006" name="Proc. Natl. Acad. Sci. U.S.A.">
        <title>Genome reduction in Leptospira borgpetersenii reflects limited transmission potential.</title>
        <authorList>
            <person name="Bulach D.M."/>
            <person name="Zuerner R.L."/>
            <person name="Wilson P."/>
            <person name="Seemann T."/>
            <person name="McGrath A."/>
            <person name="Cullen P.A."/>
            <person name="Davis J."/>
            <person name="Johnson M."/>
            <person name="Kuczek E."/>
            <person name="Alt D.P."/>
            <person name="Peterson-Burch B."/>
            <person name="Coppel R.L."/>
            <person name="Rood J.I."/>
            <person name="Davies J.K."/>
            <person name="Adler B."/>
        </authorList>
    </citation>
    <scope>NUCLEOTIDE SEQUENCE [LARGE SCALE GENOMIC DNA]</scope>
    <source>
        <strain>L550</strain>
    </source>
</reference>
<keyword id="KW-0687">Ribonucleoprotein</keyword>
<keyword id="KW-0689">Ribosomal protein</keyword>
<keyword id="KW-0694">RNA-binding</keyword>
<keyword id="KW-0699">rRNA-binding</keyword>
<keyword id="KW-0820">tRNA-binding</keyword>
<proteinExistence type="inferred from homology"/>
<evidence type="ECO:0000255" key="1">
    <source>
        <dbReference type="HAMAP-Rule" id="MF_01315"/>
    </source>
</evidence>
<evidence type="ECO:0000256" key="2">
    <source>
        <dbReference type="SAM" id="MobiDB-lite"/>
    </source>
</evidence>
<evidence type="ECO:0000305" key="3"/>
<protein>
    <recommendedName>
        <fullName evidence="1">Small ribosomal subunit protein uS13</fullName>
    </recommendedName>
    <alternativeName>
        <fullName evidence="3">30S ribosomal protein S13</fullName>
    </alternativeName>
</protein>
<comment type="function">
    <text evidence="1">Located at the top of the head of the 30S subunit, it contacts several helices of the 16S rRNA. In the 70S ribosome it contacts the 23S rRNA (bridge B1a) and protein L5 of the 50S subunit (bridge B1b), connecting the 2 subunits; these bridges are implicated in subunit movement. Contacts the tRNAs in the A and P-sites.</text>
</comment>
<comment type="subunit">
    <text evidence="1">Part of the 30S ribosomal subunit. Forms a loose heterodimer with protein S19. Forms two bridges to the 50S subunit in the 70S ribosome.</text>
</comment>
<comment type="similarity">
    <text evidence="1">Belongs to the universal ribosomal protein uS13 family.</text>
</comment>
<sequence>MARIAGIDLPREKRIVVGLTYIFGIGNSLSRVILKKAGIDESIRVKDLNESQEAAIRKALEESAKVEGDLRSEIQLNIKRLMDIGCYRGLRHRRGLPVNGQRTRTNARTRKGGKKTVANKKKVTK</sequence>
<feature type="chain" id="PRO_0000306636" description="Small ribosomal subunit protein uS13">
    <location>
        <begin position="1"/>
        <end position="125"/>
    </location>
</feature>
<feature type="region of interest" description="Disordered" evidence="2">
    <location>
        <begin position="95"/>
        <end position="125"/>
    </location>
</feature>
<feature type="compositionally biased region" description="Basic residues" evidence="2">
    <location>
        <begin position="105"/>
        <end position="125"/>
    </location>
</feature>
<gene>
    <name evidence="1" type="primary">rpsM1</name>
    <name type="ordered locus">LBL_0437</name>
</gene>
<gene>
    <name evidence="1" type="primary">rpsM2</name>
    <name type="ordered locus">LBL_0477</name>
</gene>